<protein>
    <recommendedName>
        <fullName evidence="1">Orotate phosphoribosyltransferase</fullName>
        <shortName evidence="1">OPRT</shortName>
        <shortName evidence="1">OPRTase</shortName>
        <ecNumber evidence="1">2.4.2.10</ecNumber>
    </recommendedName>
</protein>
<name>PYRE_NOCSJ</name>
<organism>
    <name type="scientific">Nocardioides sp. (strain ATCC BAA-499 / JS614)</name>
    <dbReference type="NCBI Taxonomy" id="196162"/>
    <lineage>
        <taxon>Bacteria</taxon>
        <taxon>Bacillati</taxon>
        <taxon>Actinomycetota</taxon>
        <taxon>Actinomycetes</taxon>
        <taxon>Propionibacteriales</taxon>
        <taxon>Nocardioidaceae</taxon>
        <taxon>Nocardioides</taxon>
    </lineage>
</organism>
<accession>A1SPW6</accession>
<proteinExistence type="inferred from homology"/>
<feature type="chain" id="PRO_1000138809" description="Orotate phosphoribosyltransferase">
    <location>
        <begin position="1"/>
        <end position="179"/>
    </location>
</feature>
<feature type="binding site" description="in other chain" evidence="1">
    <location>
        <position position="24"/>
    </location>
    <ligand>
        <name>5-phospho-alpha-D-ribose 1-diphosphate</name>
        <dbReference type="ChEBI" id="CHEBI:58017"/>
        <note>ligand shared between dimeric partners</note>
    </ligand>
</feature>
<feature type="binding site" evidence="1">
    <location>
        <position position="89"/>
    </location>
    <ligand>
        <name>5-phospho-alpha-D-ribose 1-diphosphate</name>
        <dbReference type="ChEBI" id="CHEBI:58017"/>
        <note>ligand shared between dimeric partners</note>
    </ligand>
</feature>
<feature type="binding site" description="in other chain" evidence="1">
    <location>
        <position position="90"/>
    </location>
    <ligand>
        <name>5-phospho-alpha-D-ribose 1-diphosphate</name>
        <dbReference type="ChEBI" id="CHEBI:58017"/>
        <note>ligand shared between dimeric partners</note>
    </ligand>
</feature>
<feature type="binding site" evidence="1">
    <location>
        <position position="93"/>
    </location>
    <ligand>
        <name>5-phospho-alpha-D-ribose 1-diphosphate</name>
        <dbReference type="ChEBI" id="CHEBI:58017"/>
        <note>ligand shared between dimeric partners</note>
    </ligand>
</feature>
<feature type="binding site" description="in other chain" evidence="1">
    <location>
        <begin position="115"/>
        <end position="123"/>
    </location>
    <ligand>
        <name>5-phospho-alpha-D-ribose 1-diphosphate</name>
        <dbReference type="ChEBI" id="CHEBI:58017"/>
        <note>ligand shared between dimeric partners</note>
    </ligand>
</feature>
<feature type="binding site" evidence="1">
    <location>
        <position position="119"/>
    </location>
    <ligand>
        <name>orotate</name>
        <dbReference type="ChEBI" id="CHEBI:30839"/>
    </ligand>
</feature>
<feature type="binding site" evidence="1">
    <location>
        <position position="147"/>
    </location>
    <ligand>
        <name>orotate</name>
        <dbReference type="ChEBI" id="CHEBI:30839"/>
    </ligand>
</feature>
<reference key="1">
    <citation type="submission" date="2006-12" db="EMBL/GenBank/DDBJ databases">
        <title>Complete sequence of chromosome 1 of Nocardioides sp. JS614.</title>
        <authorList>
            <person name="Copeland A."/>
            <person name="Lucas S."/>
            <person name="Lapidus A."/>
            <person name="Barry K."/>
            <person name="Detter J.C."/>
            <person name="Glavina del Rio T."/>
            <person name="Hammon N."/>
            <person name="Israni S."/>
            <person name="Dalin E."/>
            <person name="Tice H."/>
            <person name="Pitluck S."/>
            <person name="Thompson L.S."/>
            <person name="Brettin T."/>
            <person name="Bruce D."/>
            <person name="Han C."/>
            <person name="Tapia R."/>
            <person name="Schmutz J."/>
            <person name="Larimer F."/>
            <person name="Land M."/>
            <person name="Hauser L."/>
            <person name="Kyrpides N."/>
            <person name="Kim E."/>
            <person name="Mattes T."/>
            <person name="Gossett J."/>
            <person name="Richardson P."/>
        </authorList>
    </citation>
    <scope>NUCLEOTIDE SEQUENCE [LARGE SCALE GENOMIC DNA]</scope>
    <source>
        <strain>ATCC BAA-499 / JS614</strain>
    </source>
</reference>
<evidence type="ECO:0000255" key="1">
    <source>
        <dbReference type="HAMAP-Rule" id="MF_01208"/>
    </source>
</evidence>
<keyword id="KW-0328">Glycosyltransferase</keyword>
<keyword id="KW-0460">Magnesium</keyword>
<keyword id="KW-0665">Pyrimidine biosynthesis</keyword>
<keyword id="KW-1185">Reference proteome</keyword>
<keyword id="KW-0808">Transferase</keyword>
<gene>
    <name evidence="1" type="primary">pyrE</name>
    <name type="ordered locus">Noca_4354</name>
</gene>
<dbReference type="EC" id="2.4.2.10" evidence="1"/>
<dbReference type="EMBL" id="CP000509">
    <property type="protein sequence ID" value="ABL83851.1"/>
    <property type="molecule type" value="Genomic_DNA"/>
</dbReference>
<dbReference type="RefSeq" id="WP_011757780.1">
    <property type="nucleotide sequence ID" value="NC_008699.1"/>
</dbReference>
<dbReference type="SMR" id="A1SPW6"/>
<dbReference type="STRING" id="196162.Noca_4354"/>
<dbReference type="KEGG" id="nca:Noca_4354"/>
<dbReference type="eggNOG" id="COG0461">
    <property type="taxonomic scope" value="Bacteria"/>
</dbReference>
<dbReference type="HOGENOM" id="CLU_074878_2_0_11"/>
<dbReference type="OrthoDB" id="9779060at2"/>
<dbReference type="UniPathway" id="UPA00070">
    <property type="reaction ID" value="UER00119"/>
</dbReference>
<dbReference type="Proteomes" id="UP000000640">
    <property type="component" value="Chromosome"/>
</dbReference>
<dbReference type="GO" id="GO:0000287">
    <property type="term" value="F:magnesium ion binding"/>
    <property type="evidence" value="ECO:0007669"/>
    <property type="project" value="UniProtKB-UniRule"/>
</dbReference>
<dbReference type="GO" id="GO:0004588">
    <property type="term" value="F:orotate phosphoribosyltransferase activity"/>
    <property type="evidence" value="ECO:0007669"/>
    <property type="project" value="UniProtKB-UniRule"/>
</dbReference>
<dbReference type="GO" id="GO:0044205">
    <property type="term" value="P:'de novo' UMP biosynthetic process"/>
    <property type="evidence" value="ECO:0007669"/>
    <property type="project" value="UniProtKB-UniRule"/>
</dbReference>
<dbReference type="GO" id="GO:0019856">
    <property type="term" value="P:pyrimidine nucleobase biosynthetic process"/>
    <property type="evidence" value="ECO:0007669"/>
    <property type="project" value="TreeGrafter"/>
</dbReference>
<dbReference type="CDD" id="cd06223">
    <property type="entry name" value="PRTases_typeI"/>
    <property type="match status" value="1"/>
</dbReference>
<dbReference type="Gene3D" id="3.40.50.2020">
    <property type="match status" value="1"/>
</dbReference>
<dbReference type="HAMAP" id="MF_01208">
    <property type="entry name" value="PyrE"/>
    <property type="match status" value="1"/>
</dbReference>
<dbReference type="InterPro" id="IPR023031">
    <property type="entry name" value="OPRT"/>
</dbReference>
<dbReference type="InterPro" id="IPR004467">
    <property type="entry name" value="Or_phspho_trans_dom"/>
</dbReference>
<dbReference type="InterPro" id="IPR000836">
    <property type="entry name" value="PRibTrfase_dom"/>
</dbReference>
<dbReference type="InterPro" id="IPR029057">
    <property type="entry name" value="PRTase-like"/>
</dbReference>
<dbReference type="NCBIfam" id="TIGR00336">
    <property type="entry name" value="pyrE"/>
    <property type="match status" value="1"/>
</dbReference>
<dbReference type="PANTHER" id="PTHR19278">
    <property type="entry name" value="OROTATE PHOSPHORIBOSYLTRANSFERASE"/>
    <property type="match status" value="1"/>
</dbReference>
<dbReference type="PANTHER" id="PTHR19278:SF9">
    <property type="entry name" value="URIDINE 5'-MONOPHOSPHATE SYNTHASE"/>
    <property type="match status" value="1"/>
</dbReference>
<dbReference type="Pfam" id="PF00156">
    <property type="entry name" value="Pribosyltran"/>
    <property type="match status" value="1"/>
</dbReference>
<dbReference type="SUPFAM" id="SSF53271">
    <property type="entry name" value="PRTase-like"/>
    <property type="match status" value="1"/>
</dbReference>
<comment type="function">
    <text evidence="1">Catalyzes the transfer of a ribosyl phosphate group from 5-phosphoribose 1-diphosphate to orotate, leading to the formation of orotidine monophosphate (OMP).</text>
</comment>
<comment type="catalytic activity">
    <reaction evidence="1">
        <text>orotidine 5'-phosphate + diphosphate = orotate + 5-phospho-alpha-D-ribose 1-diphosphate</text>
        <dbReference type="Rhea" id="RHEA:10380"/>
        <dbReference type="ChEBI" id="CHEBI:30839"/>
        <dbReference type="ChEBI" id="CHEBI:33019"/>
        <dbReference type="ChEBI" id="CHEBI:57538"/>
        <dbReference type="ChEBI" id="CHEBI:58017"/>
        <dbReference type="EC" id="2.4.2.10"/>
    </reaction>
</comment>
<comment type="cofactor">
    <cofactor evidence="1">
        <name>Mg(2+)</name>
        <dbReference type="ChEBI" id="CHEBI:18420"/>
    </cofactor>
</comment>
<comment type="pathway">
    <text evidence="1">Pyrimidine metabolism; UMP biosynthesis via de novo pathway; UMP from orotate: step 1/2.</text>
</comment>
<comment type="subunit">
    <text evidence="1">Homodimer.</text>
</comment>
<comment type="similarity">
    <text evidence="1">Belongs to the purine/pyrimidine phosphoribosyltransferase family. PyrE subfamily.</text>
</comment>
<sequence>MTLDATLAADIDAVCRLTGQFTLRSGQQATEYFDKYLFEADPQLLLRVAREMVGLLPDGTDLLGGLELGGVPIATMVSSLTGRPALYVRKKAKEYGTCKLAEGPDVAGRRVTLIEDVITTGGAVRDATRALRAAGAEVDVVVCAIDRSPAGEHPLADVGLEVRPVLTKAELDAAREAGA</sequence>